<comment type="function">
    <text>Actins are highly conserved proteins that are involved in various types of cell motility and are ubiquitously expressed in all eukaryotic cells.</text>
</comment>
<comment type="catalytic activity">
    <reaction evidence="2">
        <text>ATP + H2O = ADP + phosphate + H(+)</text>
        <dbReference type="Rhea" id="RHEA:13065"/>
        <dbReference type="ChEBI" id="CHEBI:15377"/>
        <dbReference type="ChEBI" id="CHEBI:15378"/>
        <dbReference type="ChEBI" id="CHEBI:30616"/>
        <dbReference type="ChEBI" id="CHEBI:43474"/>
        <dbReference type="ChEBI" id="CHEBI:456216"/>
    </reaction>
</comment>
<comment type="subcellular location">
    <subcellularLocation>
        <location>Cytoplasm</location>
        <location>Cytoskeleton</location>
    </subcellularLocation>
</comment>
<comment type="miscellaneous">
    <text>In this organism there are four genes coding for actin. The sequences coded by genes 1 and 3 are identical. There are a few variations in the actins coded by genes 2 and 4.</text>
</comment>
<comment type="similarity">
    <text evidence="3">Belongs to the actin family.</text>
</comment>
<keyword id="KW-0007">Acetylation</keyword>
<keyword id="KW-0067">ATP-binding</keyword>
<keyword id="KW-0963">Cytoplasm</keyword>
<keyword id="KW-0206">Cytoskeleton</keyword>
<keyword id="KW-0378">Hydrolase</keyword>
<keyword id="KW-0547">Nucleotide-binding</keyword>
<keyword id="KW-1185">Reference proteome</keyword>
<protein>
    <recommendedName>
        <fullName>Actin-2</fullName>
        <ecNumber evidence="2">3.6.4.-</ecNumber>
    </recommendedName>
</protein>
<gene>
    <name type="primary">act-2</name>
    <name type="ORF">T04C12.5</name>
</gene>
<proteinExistence type="inferred from homology"/>
<evidence type="ECO:0000250" key="1"/>
<evidence type="ECO:0000250" key="2">
    <source>
        <dbReference type="UniProtKB" id="P68137"/>
    </source>
</evidence>
<evidence type="ECO:0000305" key="3"/>
<reference key="1">
    <citation type="journal article" date="1989" name="J. Mol. Biol.">
        <title>Wild-type and mutant actin genes in Caenorhabditis elegans.</title>
        <authorList>
            <person name="Krause M."/>
            <person name="Wild M."/>
            <person name="Rosenzweig B."/>
            <person name="Hirsh D."/>
        </authorList>
    </citation>
    <scope>NUCLEOTIDE SEQUENCE [GENOMIC DNA]</scope>
</reference>
<reference key="2">
    <citation type="journal article" date="1998" name="Science">
        <title>Genome sequence of the nematode C. elegans: a platform for investigating biology.</title>
        <authorList>
            <consortium name="The C. elegans sequencing consortium"/>
        </authorList>
    </citation>
    <scope>NUCLEOTIDE SEQUENCE [LARGE SCALE GENOMIC DNA]</scope>
    <source>
        <strain>Bristol N2</strain>
    </source>
</reference>
<reference key="3">
    <citation type="journal article" date="1983" name="J. Mol. Biol.">
        <title>Actin gene family of Caenorhabditis elegans.</title>
        <authorList>
            <person name="Files J.G."/>
            <person name="Carr S."/>
            <person name="Hirsh D."/>
        </authorList>
    </citation>
    <scope>NUCLEOTIDE SEQUENCE [GENOMIC DNA] OF 1-83</scope>
</reference>
<name>ACT2_CAEEL</name>
<organism>
    <name type="scientific">Caenorhabditis elegans</name>
    <dbReference type="NCBI Taxonomy" id="6239"/>
    <lineage>
        <taxon>Eukaryota</taxon>
        <taxon>Metazoa</taxon>
        <taxon>Ecdysozoa</taxon>
        <taxon>Nematoda</taxon>
        <taxon>Chromadorea</taxon>
        <taxon>Rhabditida</taxon>
        <taxon>Rhabditina</taxon>
        <taxon>Rhabditomorpha</taxon>
        <taxon>Rhabditoidea</taxon>
        <taxon>Rhabditidae</taxon>
        <taxon>Peloderinae</taxon>
        <taxon>Caenorhabditis</taxon>
    </lineage>
</organism>
<accession>P10984</accession>
<accession>O45744</accession>
<feature type="propeptide" id="PRO_0000000652" description="Removed in mature form" evidence="1">
    <location>
        <begin position="1"/>
        <end position="2"/>
    </location>
</feature>
<feature type="chain" id="PRO_0000000653" description="Actin-2">
    <location>
        <begin position="3"/>
        <end position="376"/>
    </location>
</feature>
<feature type="modified residue" description="N-acetylaspartate" evidence="1">
    <location>
        <position position="3"/>
    </location>
</feature>
<feature type="sequence conflict" description="In Ref. 1; CAA34718." evidence="3" ref="1">
    <original>VV</original>
    <variation>IL</variation>
    <location>
        <begin position="10"/>
        <end position="11"/>
    </location>
</feature>
<dbReference type="EC" id="3.6.4.-" evidence="2"/>
<dbReference type="EMBL" id="X16797">
    <property type="protein sequence ID" value="CAA34718.1"/>
    <property type="molecule type" value="Genomic_DNA"/>
</dbReference>
<dbReference type="EMBL" id="Z81584">
    <property type="protein sequence ID" value="CAB04675.1"/>
    <property type="molecule type" value="Genomic_DNA"/>
</dbReference>
<dbReference type="EMBL" id="J01043">
    <property type="protein sequence ID" value="AAA27888.1"/>
    <property type="molecule type" value="Genomic_DNA"/>
</dbReference>
<dbReference type="PIR" id="S16709">
    <property type="entry name" value="S16709"/>
</dbReference>
<dbReference type="PIR" id="T24448">
    <property type="entry name" value="T24448"/>
</dbReference>
<dbReference type="RefSeq" id="NP_001370033.1">
    <property type="nucleotide sequence ID" value="NM_001383398.2"/>
</dbReference>
<dbReference type="RefSeq" id="NP_505818.1">
    <property type="nucleotide sequence ID" value="NM_073417.5"/>
</dbReference>
<dbReference type="SMR" id="P10984"/>
<dbReference type="BioGRID" id="44561">
    <property type="interactions" value="58"/>
</dbReference>
<dbReference type="DIP" id="DIP-25116N"/>
<dbReference type="FunCoup" id="P10984">
    <property type="interactions" value="2172"/>
</dbReference>
<dbReference type="IntAct" id="P10984">
    <property type="interactions" value="5"/>
</dbReference>
<dbReference type="STRING" id="6239.T04C12.5.2"/>
<dbReference type="PaxDb" id="6239-T04C12.5.1"/>
<dbReference type="PeptideAtlas" id="P10984"/>
<dbReference type="EnsemblMetazoa" id="T04C12.5.1">
    <property type="protein sequence ID" value="T04C12.5.1"/>
    <property type="gene ID" value="WBGene00000064"/>
</dbReference>
<dbReference type="GeneID" id="179534"/>
<dbReference type="UCSC" id="T04C12.5">
    <property type="organism name" value="c. elegans"/>
</dbReference>
<dbReference type="AGR" id="WB:WBGene00000064"/>
<dbReference type="WormBase" id="T04C12.5">
    <property type="protein sequence ID" value="CE13150"/>
    <property type="gene ID" value="WBGene00000064"/>
    <property type="gene designation" value="act-2"/>
</dbReference>
<dbReference type="eggNOG" id="KOG0676">
    <property type="taxonomic scope" value="Eukaryota"/>
</dbReference>
<dbReference type="GeneTree" id="ENSGT00950000182960"/>
<dbReference type="HOGENOM" id="CLU_027965_0_2_1"/>
<dbReference type="InParanoid" id="P10984"/>
<dbReference type="OMA" id="GKEACGI"/>
<dbReference type="OrthoDB" id="9973372at2759"/>
<dbReference type="PhylomeDB" id="P10984"/>
<dbReference type="Reactome" id="R-CEL-114608">
    <property type="pathway name" value="Platelet degranulation"/>
</dbReference>
<dbReference type="Reactome" id="R-CEL-190873">
    <property type="pathway name" value="Gap junction degradation"/>
</dbReference>
<dbReference type="Reactome" id="R-CEL-196025">
    <property type="pathway name" value="Formation of annular gap junctions"/>
</dbReference>
<dbReference type="Reactome" id="R-CEL-2029482">
    <property type="pathway name" value="Regulation of actin dynamics for phagocytic cup formation"/>
</dbReference>
<dbReference type="Reactome" id="R-CEL-3928662">
    <property type="pathway name" value="EPHB-mediated forward signaling"/>
</dbReference>
<dbReference type="Reactome" id="R-CEL-3928665">
    <property type="pathway name" value="EPH-ephrin mediated repulsion of cells"/>
</dbReference>
<dbReference type="Reactome" id="R-CEL-437239">
    <property type="pathway name" value="Recycling pathway of L1"/>
</dbReference>
<dbReference type="Reactome" id="R-CEL-4420097">
    <property type="pathway name" value="VEGFA-VEGFR2 Pathway"/>
</dbReference>
<dbReference type="Reactome" id="R-CEL-446353">
    <property type="pathway name" value="Cell-extracellular matrix interactions"/>
</dbReference>
<dbReference type="Reactome" id="R-CEL-5626467">
    <property type="pathway name" value="RHO GTPases activate IQGAPs"/>
</dbReference>
<dbReference type="Reactome" id="R-CEL-5663213">
    <property type="pathway name" value="RHO GTPases Activate WASPs and WAVEs"/>
</dbReference>
<dbReference type="Reactome" id="R-CEL-5663220">
    <property type="pathway name" value="RHO GTPases Activate Formins"/>
</dbReference>
<dbReference type="Reactome" id="R-CEL-5674135">
    <property type="pathway name" value="MAP2K and MAPK activation"/>
</dbReference>
<dbReference type="Reactome" id="R-CEL-8856828">
    <property type="pathway name" value="Clathrin-mediated endocytosis"/>
</dbReference>
<dbReference type="Reactome" id="R-CEL-9035034">
    <property type="pathway name" value="RHOF GTPase cycle"/>
</dbReference>
<dbReference type="Reactome" id="R-CEL-9913351">
    <property type="pathway name" value="Formation of the dystrophin-glycoprotein complex (DGC)"/>
</dbReference>
<dbReference type="SignaLink" id="P10984"/>
<dbReference type="PRO" id="PR:P10984"/>
<dbReference type="Proteomes" id="UP000001940">
    <property type="component" value="Chromosome V"/>
</dbReference>
<dbReference type="Bgee" id="WBGene00000064">
    <property type="expression patterns" value="Expressed in embryo and 3 other cell types or tissues"/>
</dbReference>
<dbReference type="GO" id="GO:0015629">
    <property type="term" value="C:actin cytoskeleton"/>
    <property type="evidence" value="ECO:0000318"/>
    <property type="project" value="GO_Central"/>
</dbReference>
<dbReference type="GO" id="GO:0005884">
    <property type="term" value="C:actin filament"/>
    <property type="evidence" value="ECO:0000314"/>
    <property type="project" value="WormBase"/>
</dbReference>
<dbReference type="GO" id="GO:0005938">
    <property type="term" value="C:cell cortex"/>
    <property type="evidence" value="ECO:0000314"/>
    <property type="project" value="WormBase"/>
</dbReference>
<dbReference type="GO" id="GO:0005737">
    <property type="term" value="C:cytoplasm"/>
    <property type="evidence" value="ECO:0000314"/>
    <property type="project" value="WormBase"/>
</dbReference>
<dbReference type="GO" id="GO:0005524">
    <property type="term" value="F:ATP binding"/>
    <property type="evidence" value="ECO:0000250"/>
    <property type="project" value="WormBase"/>
</dbReference>
<dbReference type="GO" id="GO:0016787">
    <property type="term" value="F:hydrolase activity"/>
    <property type="evidence" value="ECO:0007669"/>
    <property type="project" value="UniProtKB-KW"/>
</dbReference>
<dbReference type="GO" id="GO:0030866">
    <property type="term" value="P:cortical actin cytoskeleton organization"/>
    <property type="evidence" value="ECO:0000315"/>
    <property type="project" value="WormBase"/>
</dbReference>
<dbReference type="GO" id="GO:0009792">
    <property type="term" value="P:embryo development ending in birth or egg hatching"/>
    <property type="evidence" value="ECO:0000316"/>
    <property type="project" value="WormBase"/>
</dbReference>
<dbReference type="GO" id="GO:0040011">
    <property type="term" value="P:locomotion"/>
    <property type="evidence" value="ECO:0000315"/>
    <property type="project" value="WormBase"/>
</dbReference>
<dbReference type="GO" id="GO:0007111">
    <property type="term" value="P:meiosis II cytokinesis"/>
    <property type="evidence" value="ECO:0000315"/>
    <property type="project" value="WormBase"/>
</dbReference>
<dbReference type="GO" id="GO:0000281">
    <property type="term" value="P:mitotic cytokinesis"/>
    <property type="evidence" value="ECO:0000316"/>
    <property type="project" value="WormBase"/>
</dbReference>
<dbReference type="CDD" id="cd10224">
    <property type="entry name" value="ASKHA_NBD_actin"/>
    <property type="match status" value="1"/>
</dbReference>
<dbReference type="FunFam" id="3.30.420.40:FF:000131">
    <property type="entry name" value="Actin, alpha skeletal muscle"/>
    <property type="match status" value="1"/>
</dbReference>
<dbReference type="FunFam" id="3.30.420.40:FF:000291">
    <property type="entry name" value="Actin, alpha skeletal muscle"/>
    <property type="match status" value="1"/>
</dbReference>
<dbReference type="FunFam" id="3.90.640.10:FF:000047">
    <property type="entry name" value="Actin, alpha skeletal muscle"/>
    <property type="match status" value="1"/>
</dbReference>
<dbReference type="FunFam" id="3.30.420.40:FF:000058">
    <property type="entry name" value="Putative actin-related protein 5"/>
    <property type="match status" value="1"/>
</dbReference>
<dbReference type="Gene3D" id="3.30.420.40">
    <property type="match status" value="2"/>
</dbReference>
<dbReference type="Gene3D" id="3.90.640.10">
    <property type="entry name" value="Actin, Chain A, domain 4"/>
    <property type="match status" value="1"/>
</dbReference>
<dbReference type="InterPro" id="IPR004000">
    <property type="entry name" value="Actin"/>
</dbReference>
<dbReference type="InterPro" id="IPR020902">
    <property type="entry name" value="Actin/actin-like_CS"/>
</dbReference>
<dbReference type="InterPro" id="IPR004001">
    <property type="entry name" value="Actin_CS"/>
</dbReference>
<dbReference type="InterPro" id="IPR043129">
    <property type="entry name" value="ATPase_NBD"/>
</dbReference>
<dbReference type="PANTHER" id="PTHR11937">
    <property type="entry name" value="ACTIN"/>
    <property type="match status" value="1"/>
</dbReference>
<dbReference type="Pfam" id="PF00022">
    <property type="entry name" value="Actin"/>
    <property type="match status" value="1"/>
</dbReference>
<dbReference type="PRINTS" id="PR00190">
    <property type="entry name" value="ACTIN"/>
</dbReference>
<dbReference type="SMART" id="SM00268">
    <property type="entry name" value="ACTIN"/>
    <property type="match status" value="1"/>
</dbReference>
<dbReference type="SUPFAM" id="SSF53067">
    <property type="entry name" value="Actin-like ATPase domain"/>
    <property type="match status" value="2"/>
</dbReference>
<dbReference type="PROSITE" id="PS00406">
    <property type="entry name" value="ACTINS_1"/>
    <property type="match status" value="1"/>
</dbReference>
<dbReference type="PROSITE" id="PS00432">
    <property type="entry name" value="ACTINS_2"/>
    <property type="match status" value="1"/>
</dbReference>
<dbReference type="PROSITE" id="PS01132">
    <property type="entry name" value="ACTINS_ACT_LIKE"/>
    <property type="match status" value="1"/>
</dbReference>
<sequence length="376" mass="41778">MCDDDVAALVVDNGSGMCKAGFAGDDAPRAVFPSIVGRPRHQGVMVGMGQKDSYVGDEAQSKRGILTLKYPIEHGIVTNWDDMEKIWHHTFYNELRVAPEEHPVLLTEAPLNPKANREKMTQIMFETFNTPAMYVAIQAVLSLYASGRTTGIVLDSGDGVTHTVPIYEGYALPHAILRLDLAGRDLTDYLMKILTERGYSFTTTAEREIVRDIKEKLCYVALDFEQEMATAASSSSLEKSYELPDGQVITVGNERFRCPEALFQPSFLGMESAGIHETSYNSIMKCDIDIRKDLYANTVLSGGTTMYPGIADRMQKEITALAPSTMKIKIIAPPERKYSVWIGGSILASLSTFQQMWISKQEYDESGPSIVHRKCF</sequence>